<reference key="1">
    <citation type="journal article" date="2008" name="Genome Biol.">
        <title>A genomic analysis of the archaeal system Ignicoccus hospitalis-Nanoarchaeum equitans.</title>
        <authorList>
            <person name="Podar M."/>
            <person name="Anderson I."/>
            <person name="Makarova K.S."/>
            <person name="Elkins J.G."/>
            <person name="Ivanova N."/>
            <person name="Wall M.A."/>
            <person name="Lykidis A."/>
            <person name="Mavromatis K."/>
            <person name="Sun H."/>
            <person name="Hudson M.E."/>
            <person name="Chen W."/>
            <person name="Deciu C."/>
            <person name="Hutchison D."/>
            <person name="Eads J.R."/>
            <person name="Anderson A."/>
            <person name="Fernandes F."/>
            <person name="Szeto E."/>
            <person name="Lapidus A."/>
            <person name="Kyrpides N.C."/>
            <person name="Saier M.H. Jr."/>
            <person name="Richardson P.M."/>
            <person name="Rachel R."/>
            <person name="Huber H."/>
            <person name="Eisen J.A."/>
            <person name="Koonin E.V."/>
            <person name="Keller M."/>
            <person name="Stetter K.O."/>
        </authorList>
    </citation>
    <scope>NUCLEOTIDE SEQUENCE [LARGE SCALE GENOMIC DNA]</scope>
    <source>
        <strain>KIN4/I / DSM 18386 / JCM 14125</strain>
    </source>
</reference>
<feature type="chain" id="PRO_1000068379" description="2,3-bisphosphoglycerate-independent phosphoglycerate mutase">
    <location>
        <begin position="1"/>
        <end position="416"/>
    </location>
</feature>
<dbReference type="EC" id="5.4.2.12" evidence="1"/>
<dbReference type="EMBL" id="CP000816">
    <property type="protein sequence ID" value="ABU82550.1"/>
    <property type="molecule type" value="Genomic_DNA"/>
</dbReference>
<dbReference type="RefSeq" id="WP_012123514.1">
    <property type="nucleotide sequence ID" value="NC_009776.1"/>
</dbReference>
<dbReference type="SMR" id="A8AC98"/>
<dbReference type="STRING" id="453591.Igni_1374"/>
<dbReference type="GeneID" id="5562280"/>
<dbReference type="KEGG" id="iho:Igni_1374"/>
<dbReference type="eggNOG" id="arCOG01696">
    <property type="taxonomic scope" value="Archaea"/>
</dbReference>
<dbReference type="HOGENOM" id="CLU_034906_2_0_2"/>
<dbReference type="OrthoDB" id="52918at2157"/>
<dbReference type="PhylomeDB" id="A8AC98"/>
<dbReference type="UniPathway" id="UPA00109">
    <property type="reaction ID" value="UER00186"/>
</dbReference>
<dbReference type="Proteomes" id="UP000000262">
    <property type="component" value="Chromosome"/>
</dbReference>
<dbReference type="GO" id="GO:0046872">
    <property type="term" value="F:metal ion binding"/>
    <property type="evidence" value="ECO:0007669"/>
    <property type="project" value="InterPro"/>
</dbReference>
<dbReference type="GO" id="GO:0004619">
    <property type="term" value="F:phosphoglycerate mutase activity"/>
    <property type="evidence" value="ECO:0007669"/>
    <property type="project" value="UniProtKB-EC"/>
</dbReference>
<dbReference type="GO" id="GO:0006096">
    <property type="term" value="P:glycolytic process"/>
    <property type="evidence" value="ECO:0007669"/>
    <property type="project" value="UniProtKB-UniRule"/>
</dbReference>
<dbReference type="CDD" id="cd16011">
    <property type="entry name" value="iPGM_like"/>
    <property type="match status" value="1"/>
</dbReference>
<dbReference type="Gene3D" id="3.40.720.10">
    <property type="entry name" value="Alkaline Phosphatase, subunit A"/>
    <property type="match status" value="2"/>
</dbReference>
<dbReference type="HAMAP" id="MF_01402_A">
    <property type="entry name" value="ApgM_A"/>
    <property type="match status" value="1"/>
</dbReference>
<dbReference type="InterPro" id="IPR017850">
    <property type="entry name" value="Alkaline_phosphatase_core_sf"/>
</dbReference>
<dbReference type="InterPro" id="IPR023665">
    <property type="entry name" value="ApgAM_prokaryotes"/>
</dbReference>
<dbReference type="InterPro" id="IPR006124">
    <property type="entry name" value="Metalloenzyme"/>
</dbReference>
<dbReference type="InterPro" id="IPR004456">
    <property type="entry name" value="Pglycerate_mutase_ApgM"/>
</dbReference>
<dbReference type="NCBIfam" id="TIGR00306">
    <property type="entry name" value="apgM"/>
    <property type="match status" value="1"/>
</dbReference>
<dbReference type="NCBIfam" id="NF003104">
    <property type="entry name" value="PRK04024.1"/>
    <property type="match status" value="1"/>
</dbReference>
<dbReference type="PANTHER" id="PTHR31209">
    <property type="entry name" value="COFACTOR-INDEPENDENT PHOSPHOGLYCERATE MUTASE"/>
    <property type="match status" value="1"/>
</dbReference>
<dbReference type="PANTHER" id="PTHR31209:SF0">
    <property type="entry name" value="METALLOENZYME DOMAIN-CONTAINING PROTEIN"/>
    <property type="match status" value="1"/>
</dbReference>
<dbReference type="Pfam" id="PF01676">
    <property type="entry name" value="Metalloenzyme"/>
    <property type="match status" value="1"/>
</dbReference>
<dbReference type="Pfam" id="PF10143">
    <property type="entry name" value="PhosphMutase"/>
    <property type="match status" value="1"/>
</dbReference>
<dbReference type="PIRSF" id="PIRSF006392">
    <property type="entry name" value="IPGAM_arch"/>
    <property type="match status" value="1"/>
</dbReference>
<dbReference type="SUPFAM" id="SSF53649">
    <property type="entry name" value="Alkaline phosphatase-like"/>
    <property type="match status" value="1"/>
</dbReference>
<keyword id="KW-0324">Glycolysis</keyword>
<keyword id="KW-0413">Isomerase</keyword>
<keyword id="KW-1185">Reference proteome</keyword>
<proteinExistence type="inferred from homology"/>
<accession>A8AC98</accession>
<organism>
    <name type="scientific">Ignicoccus hospitalis (strain KIN4/I / DSM 18386 / JCM 14125)</name>
    <dbReference type="NCBI Taxonomy" id="453591"/>
    <lineage>
        <taxon>Archaea</taxon>
        <taxon>Thermoproteota</taxon>
        <taxon>Thermoprotei</taxon>
        <taxon>Desulfurococcales</taxon>
        <taxon>Desulfurococcaceae</taxon>
        <taxon>Ignicoccus</taxon>
    </lineage>
</organism>
<protein>
    <recommendedName>
        <fullName evidence="1">2,3-bisphosphoglycerate-independent phosphoglycerate mutase</fullName>
        <shortName evidence="1">BPG-independent PGAM</shortName>
        <shortName evidence="1">Phosphoglyceromutase</shortName>
        <shortName evidence="1">aPGAM</shortName>
        <ecNumber evidence="1">5.4.2.12</ecNumber>
    </recommendedName>
</protein>
<sequence>MKQLKMVLIVGDGMGDRLVPSLGNKTPLEVASTPNLDEAARRGQAGLMDVIAPGVPPGSDTAHLALFGLDPFEWYEGRGPFEALGVGAEVGPGDVALRGNFATVEERGGRLVVVDRRAGRYLPEAEELVKALNEELSEVEGVKVRFYHATEHRVAVVLKGEGLSDEVSDTDPHEVGKPVQEARPLRDTPEAKKTARVINEITFRSYQILKDHPANKRRVEKGLPPANIVLLRGAGMMRKKLPTLQERYGIKAAAVGATALVLGVARAVGMDVIVPPGATGGVNTDYKSKARTAVELLKDYDMVFVHIKGTDAASHDGDVENKIKMIEALDYVLGYLLDYYDGEAVFAVTPDHATPVTVKEHTGDPVPVLLYAPTLIPDEAVEYNERAVRKGILRIRGRDLINLMLNYSNRAKKFGA</sequence>
<name>APGM_IGNH4</name>
<comment type="function">
    <text evidence="1">Catalyzes the interconversion of 2-phosphoglycerate and 3-phosphoglycerate.</text>
</comment>
<comment type="catalytic activity">
    <reaction evidence="1">
        <text>(2R)-2-phosphoglycerate = (2R)-3-phosphoglycerate</text>
        <dbReference type="Rhea" id="RHEA:15901"/>
        <dbReference type="ChEBI" id="CHEBI:58272"/>
        <dbReference type="ChEBI" id="CHEBI:58289"/>
        <dbReference type="EC" id="5.4.2.12"/>
    </reaction>
</comment>
<comment type="pathway">
    <text evidence="1">Carbohydrate degradation; glycolysis; pyruvate from D-glyceraldehyde 3-phosphate: step 3/5.</text>
</comment>
<comment type="similarity">
    <text evidence="1">Belongs to the BPG-independent phosphoglycerate mutase family. A-PGAM subfamily.</text>
</comment>
<gene>
    <name evidence="1" type="primary">apgM</name>
    <name type="ordered locus">Igni_1374</name>
</gene>
<evidence type="ECO:0000255" key="1">
    <source>
        <dbReference type="HAMAP-Rule" id="MF_01402"/>
    </source>
</evidence>